<comment type="function">
    <text evidence="1">This is one of the proteins that bind and probably mediate the attachment of the 5S RNA into the large ribosomal subunit, where it forms part of the central protuberance. In the 70S ribosome it contacts protein S13 of the 30S subunit (bridge B1b), connecting the 2 subunits; this bridge is implicated in subunit movement. Contacts the P site tRNA; the 5S rRNA and some of its associated proteins might help stabilize positioning of ribosome-bound tRNAs.</text>
</comment>
<comment type="subunit">
    <text evidence="1">Part of the 50S ribosomal subunit; part of the 5S rRNA/L5/L18/L25 subcomplex. Contacts the 5S rRNA and the P site tRNA. Forms a bridge to the 30S subunit in the 70S ribosome.</text>
</comment>
<comment type="similarity">
    <text evidence="1">Belongs to the universal ribosomal protein uL5 family.</text>
</comment>
<accession>Q5FTZ5</accession>
<feature type="chain" id="PRO_0000243006" description="Large ribosomal subunit protein uL5">
    <location>
        <begin position="1"/>
        <end position="187"/>
    </location>
</feature>
<proteinExistence type="inferred from homology"/>
<dbReference type="EMBL" id="CP000009">
    <property type="protein sequence ID" value="AAW60151.1"/>
    <property type="molecule type" value="Genomic_DNA"/>
</dbReference>
<dbReference type="RefSeq" id="WP_011251954.1">
    <property type="nucleotide sequence ID" value="NZ_LT900338.1"/>
</dbReference>
<dbReference type="SMR" id="Q5FTZ5"/>
<dbReference type="STRING" id="290633.GOX0368"/>
<dbReference type="GeneID" id="56904634"/>
<dbReference type="KEGG" id="gox:GOX0368"/>
<dbReference type="eggNOG" id="COG0094">
    <property type="taxonomic scope" value="Bacteria"/>
</dbReference>
<dbReference type="HOGENOM" id="CLU_061015_2_1_5"/>
<dbReference type="Proteomes" id="UP000006375">
    <property type="component" value="Chromosome"/>
</dbReference>
<dbReference type="GO" id="GO:1990904">
    <property type="term" value="C:ribonucleoprotein complex"/>
    <property type="evidence" value="ECO:0007669"/>
    <property type="project" value="UniProtKB-KW"/>
</dbReference>
<dbReference type="GO" id="GO:0005840">
    <property type="term" value="C:ribosome"/>
    <property type="evidence" value="ECO:0007669"/>
    <property type="project" value="UniProtKB-KW"/>
</dbReference>
<dbReference type="GO" id="GO:0019843">
    <property type="term" value="F:rRNA binding"/>
    <property type="evidence" value="ECO:0007669"/>
    <property type="project" value="UniProtKB-UniRule"/>
</dbReference>
<dbReference type="GO" id="GO:0003735">
    <property type="term" value="F:structural constituent of ribosome"/>
    <property type="evidence" value="ECO:0007669"/>
    <property type="project" value="InterPro"/>
</dbReference>
<dbReference type="GO" id="GO:0000049">
    <property type="term" value="F:tRNA binding"/>
    <property type="evidence" value="ECO:0007669"/>
    <property type="project" value="UniProtKB-UniRule"/>
</dbReference>
<dbReference type="GO" id="GO:0006412">
    <property type="term" value="P:translation"/>
    <property type="evidence" value="ECO:0007669"/>
    <property type="project" value="UniProtKB-UniRule"/>
</dbReference>
<dbReference type="FunFam" id="3.30.1440.10:FF:000001">
    <property type="entry name" value="50S ribosomal protein L5"/>
    <property type="match status" value="1"/>
</dbReference>
<dbReference type="Gene3D" id="3.30.1440.10">
    <property type="match status" value="1"/>
</dbReference>
<dbReference type="HAMAP" id="MF_01333_B">
    <property type="entry name" value="Ribosomal_uL5_B"/>
    <property type="match status" value="1"/>
</dbReference>
<dbReference type="InterPro" id="IPR002132">
    <property type="entry name" value="Ribosomal_uL5"/>
</dbReference>
<dbReference type="InterPro" id="IPR020930">
    <property type="entry name" value="Ribosomal_uL5_bac-type"/>
</dbReference>
<dbReference type="InterPro" id="IPR031309">
    <property type="entry name" value="Ribosomal_uL5_C"/>
</dbReference>
<dbReference type="InterPro" id="IPR020929">
    <property type="entry name" value="Ribosomal_uL5_CS"/>
</dbReference>
<dbReference type="InterPro" id="IPR022803">
    <property type="entry name" value="Ribosomal_uL5_dom_sf"/>
</dbReference>
<dbReference type="InterPro" id="IPR031310">
    <property type="entry name" value="Ribosomal_uL5_N"/>
</dbReference>
<dbReference type="NCBIfam" id="NF000585">
    <property type="entry name" value="PRK00010.1"/>
    <property type="match status" value="1"/>
</dbReference>
<dbReference type="PANTHER" id="PTHR11994">
    <property type="entry name" value="60S RIBOSOMAL PROTEIN L11-RELATED"/>
    <property type="match status" value="1"/>
</dbReference>
<dbReference type="Pfam" id="PF00281">
    <property type="entry name" value="Ribosomal_L5"/>
    <property type="match status" value="1"/>
</dbReference>
<dbReference type="Pfam" id="PF00673">
    <property type="entry name" value="Ribosomal_L5_C"/>
    <property type="match status" value="1"/>
</dbReference>
<dbReference type="PIRSF" id="PIRSF002161">
    <property type="entry name" value="Ribosomal_L5"/>
    <property type="match status" value="1"/>
</dbReference>
<dbReference type="SUPFAM" id="SSF55282">
    <property type="entry name" value="RL5-like"/>
    <property type="match status" value="1"/>
</dbReference>
<dbReference type="PROSITE" id="PS00358">
    <property type="entry name" value="RIBOSOMAL_L5"/>
    <property type="match status" value="1"/>
</dbReference>
<sequence>MSEYKNALPRLHQRYEDVLKKQLREQFGYANELQVPKLEKIVLNMGVGEAAGDQKKLDAAVAEMTVISGQKPVKTLARKAIAGFKIREGLPIGCKVTLRRARMYEFLDRLVTIAMPRIRDFRGLPANKGFDGHGNFAMGIKEQIVFPEIEYDKIDAVRGMDIIFVTSAKSDAEAKALLKAFDLPFNG</sequence>
<organism>
    <name type="scientific">Gluconobacter oxydans (strain 621H)</name>
    <name type="common">Gluconobacter suboxydans</name>
    <dbReference type="NCBI Taxonomy" id="290633"/>
    <lineage>
        <taxon>Bacteria</taxon>
        <taxon>Pseudomonadati</taxon>
        <taxon>Pseudomonadota</taxon>
        <taxon>Alphaproteobacteria</taxon>
        <taxon>Acetobacterales</taxon>
        <taxon>Acetobacteraceae</taxon>
        <taxon>Gluconobacter</taxon>
    </lineage>
</organism>
<name>RL5_GLUOX</name>
<evidence type="ECO:0000255" key="1">
    <source>
        <dbReference type="HAMAP-Rule" id="MF_01333"/>
    </source>
</evidence>
<evidence type="ECO:0000305" key="2"/>
<gene>
    <name evidence="1" type="primary">rplE</name>
    <name type="ordered locus">GOX0368</name>
</gene>
<reference key="1">
    <citation type="journal article" date="2005" name="Nat. Biotechnol.">
        <title>Complete genome sequence of the acetic acid bacterium Gluconobacter oxydans.</title>
        <authorList>
            <person name="Prust C."/>
            <person name="Hoffmeister M."/>
            <person name="Liesegang H."/>
            <person name="Wiezer A."/>
            <person name="Fricke W.F."/>
            <person name="Ehrenreich A."/>
            <person name="Gottschalk G."/>
            <person name="Deppenmeier U."/>
        </authorList>
    </citation>
    <scope>NUCLEOTIDE SEQUENCE [LARGE SCALE GENOMIC DNA]</scope>
    <source>
        <strain>621H</strain>
    </source>
</reference>
<keyword id="KW-1185">Reference proteome</keyword>
<keyword id="KW-0687">Ribonucleoprotein</keyword>
<keyword id="KW-0689">Ribosomal protein</keyword>
<keyword id="KW-0694">RNA-binding</keyword>
<keyword id="KW-0699">rRNA-binding</keyword>
<keyword id="KW-0820">tRNA-binding</keyword>
<protein>
    <recommendedName>
        <fullName evidence="1">Large ribosomal subunit protein uL5</fullName>
    </recommendedName>
    <alternativeName>
        <fullName evidence="2">50S ribosomal protein L5</fullName>
    </alternativeName>
</protein>